<accession>Q9GNL3</accession>
<accession>Q9W387</accession>
<reference evidence="4 8" key="1">
    <citation type="journal article" date="2002" name="J. Neurobiol.">
        <title>Forked end: a novel transmembrane protein involved in neuromuscular specificity in drosophila identified by gain-of-function screening.</title>
        <authorList>
            <person name="Umemiya T."/>
            <person name="Takasu E."/>
            <person name="Takeichi M."/>
            <person name="Aigaki T."/>
            <person name="Nose A."/>
        </authorList>
    </citation>
    <scope>NUCLEOTIDE SEQUENCE [MRNA]</scope>
    <scope>FUNCTION</scope>
    <scope>DEVELOPMENTAL STAGE</scope>
    <scope>DISRUPTION PHENOTYPE</scope>
    <source>
        <tissue evidence="2">Larva</tissue>
    </source>
</reference>
<reference evidence="6" key="2">
    <citation type="submission" date="1999-12" db="EMBL/GenBank/DDBJ databases">
        <title>ld14 a new gene in 8D.</title>
        <authorList>
            <person name="Blanca-Postigo J.M."/>
            <person name="Canizares-Sales J."/>
            <person name="Navarro-Langa J.A."/>
            <person name="Molto-Ruiz M.D."/>
        </authorList>
    </citation>
    <scope>NUCLEOTIDE SEQUENCE [MRNA]</scope>
    <source>
        <tissue evidence="3">Embryo</tissue>
    </source>
</reference>
<reference evidence="5" key="3">
    <citation type="journal article" date="2000" name="Science">
        <title>The genome sequence of Drosophila melanogaster.</title>
        <authorList>
            <person name="Adams M.D."/>
            <person name="Celniker S.E."/>
            <person name="Holt R.A."/>
            <person name="Evans C.A."/>
            <person name="Gocayne J.D."/>
            <person name="Amanatides P.G."/>
            <person name="Scherer S.E."/>
            <person name="Li P.W."/>
            <person name="Hoskins R.A."/>
            <person name="Galle R.F."/>
            <person name="George R.A."/>
            <person name="Lewis S.E."/>
            <person name="Richards S."/>
            <person name="Ashburner M."/>
            <person name="Henderson S.N."/>
            <person name="Sutton G.G."/>
            <person name="Wortman J.R."/>
            <person name="Yandell M.D."/>
            <person name="Zhang Q."/>
            <person name="Chen L.X."/>
            <person name="Brandon R.C."/>
            <person name="Rogers Y.-H.C."/>
            <person name="Blazej R.G."/>
            <person name="Champe M."/>
            <person name="Pfeiffer B.D."/>
            <person name="Wan K.H."/>
            <person name="Doyle C."/>
            <person name="Baxter E.G."/>
            <person name="Helt G."/>
            <person name="Nelson C.R."/>
            <person name="Miklos G.L.G."/>
            <person name="Abril J.F."/>
            <person name="Agbayani A."/>
            <person name="An H.-J."/>
            <person name="Andrews-Pfannkoch C."/>
            <person name="Baldwin D."/>
            <person name="Ballew R.M."/>
            <person name="Basu A."/>
            <person name="Baxendale J."/>
            <person name="Bayraktaroglu L."/>
            <person name="Beasley E.M."/>
            <person name="Beeson K.Y."/>
            <person name="Benos P.V."/>
            <person name="Berman B.P."/>
            <person name="Bhandari D."/>
            <person name="Bolshakov S."/>
            <person name="Borkova D."/>
            <person name="Botchan M.R."/>
            <person name="Bouck J."/>
            <person name="Brokstein P."/>
            <person name="Brottier P."/>
            <person name="Burtis K.C."/>
            <person name="Busam D.A."/>
            <person name="Butler H."/>
            <person name="Cadieu E."/>
            <person name="Center A."/>
            <person name="Chandra I."/>
            <person name="Cherry J.M."/>
            <person name="Cawley S."/>
            <person name="Dahlke C."/>
            <person name="Davenport L.B."/>
            <person name="Davies P."/>
            <person name="de Pablos B."/>
            <person name="Delcher A."/>
            <person name="Deng Z."/>
            <person name="Mays A.D."/>
            <person name="Dew I."/>
            <person name="Dietz S.M."/>
            <person name="Dodson K."/>
            <person name="Doup L.E."/>
            <person name="Downes M."/>
            <person name="Dugan-Rocha S."/>
            <person name="Dunkov B.C."/>
            <person name="Dunn P."/>
            <person name="Durbin K.J."/>
            <person name="Evangelista C.C."/>
            <person name="Ferraz C."/>
            <person name="Ferriera S."/>
            <person name="Fleischmann W."/>
            <person name="Fosler C."/>
            <person name="Gabrielian A.E."/>
            <person name="Garg N.S."/>
            <person name="Gelbart W.M."/>
            <person name="Glasser K."/>
            <person name="Glodek A."/>
            <person name="Gong F."/>
            <person name="Gorrell J.H."/>
            <person name="Gu Z."/>
            <person name="Guan P."/>
            <person name="Harris M."/>
            <person name="Harris N.L."/>
            <person name="Harvey D.A."/>
            <person name="Heiman T.J."/>
            <person name="Hernandez J.R."/>
            <person name="Houck J."/>
            <person name="Hostin D."/>
            <person name="Houston K.A."/>
            <person name="Howland T.J."/>
            <person name="Wei M.-H."/>
            <person name="Ibegwam C."/>
            <person name="Jalali M."/>
            <person name="Kalush F."/>
            <person name="Karpen G.H."/>
            <person name="Ke Z."/>
            <person name="Kennison J.A."/>
            <person name="Ketchum K.A."/>
            <person name="Kimmel B.E."/>
            <person name="Kodira C.D."/>
            <person name="Kraft C.L."/>
            <person name="Kravitz S."/>
            <person name="Kulp D."/>
            <person name="Lai Z."/>
            <person name="Lasko P."/>
            <person name="Lei Y."/>
            <person name="Levitsky A.A."/>
            <person name="Li J.H."/>
            <person name="Li Z."/>
            <person name="Liang Y."/>
            <person name="Lin X."/>
            <person name="Liu X."/>
            <person name="Mattei B."/>
            <person name="McIntosh T.C."/>
            <person name="McLeod M.P."/>
            <person name="McPherson D."/>
            <person name="Merkulov G."/>
            <person name="Milshina N.V."/>
            <person name="Mobarry C."/>
            <person name="Morris J."/>
            <person name="Moshrefi A."/>
            <person name="Mount S.M."/>
            <person name="Moy M."/>
            <person name="Murphy B."/>
            <person name="Murphy L."/>
            <person name="Muzny D.M."/>
            <person name="Nelson D.L."/>
            <person name="Nelson D.R."/>
            <person name="Nelson K.A."/>
            <person name="Nixon K."/>
            <person name="Nusskern D.R."/>
            <person name="Pacleb J.M."/>
            <person name="Palazzolo M."/>
            <person name="Pittman G.S."/>
            <person name="Pan S."/>
            <person name="Pollard J."/>
            <person name="Puri V."/>
            <person name="Reese M.G."/>
            <person name="Reinert K."/>
            <person name="Remington K."/>
            <person name="Saunders R.D.C."/>
            <person name="Scheeler F."/>
            <person name="Shen H."/>
            <person name="Shue B.C."/>
            <person name="Siden-Kiamos I."/>
            <person name="Simpson M."/>
            <person name="Skupski M.P."/>
            <person name="Smith T.J."/>
            <person name="Spier E."/>
            <person name="Spradling A.C."/>
            <person name="Stapleton M."/>
            <person name="Strong R."/>
            <person name="Sun E."/>
            <person name="Svirskas R."/>
            <person name="Tector C."/>
            <person name="Turner R."/>
            <person name="Venter E."/>
            <person name="Wang A.H."/>
            <person name="Wang X."/>
            <person name="Wang Z.-Y."/>
            <person name="Wassarman D.A."/>
            <person name="Weinstock G.M."/>
            <person name="Weissenbach J."/>
            <person name="Williams S.M."/>
            <person name="Woodage T."/>
            <person name="Worley K.C."/>
            <person name="Wu D."/>
            <person name="Yang S."/>
            <person name="Yao Q.A."/>
            <person name="Ye J."/>
            <person name="Yeh R.-F."/>
            <person name="Zaveri J.S."/>
            <person name="Zhan M."/>
            <person name="Zhang G."/>
            <person name="Zhao Q."/>
            <person name="Zheng L."/>
            <person name="Zheng X.H."/>
            <person name="Zhong F.N."/>
            <person name="Zhong W."/>
            <person name="Zhou X."/>
            <person name="Zhu S.C."/>
            <person name="Zhu X."/>
            <person name="Smith H.O."/>
            <person name="Gibbs R.A."/>
            <person name="Myers E.W."/>
            <person name="Rubin G.M."/>
            <person name="Venter J.C."/>
        </authorList>
    </citation>
    <scope>NUCLEOTIDE SEQUENCE [LARGE SCALE GENOMIC DNA]</scope>
    <source>
        <strain>Berkeley</strain>
    </source>
</reference>
<reference evidence="5" key="4">
    <citation type="journal article" date="2002" name="Genome Biol.">
        <title>Annotation of the Drosophila melanogaster euchromatic genome: a systematic review.</title>
        <authorList>
            <person name="Misra S."/>
            <person name="Crosby M.A."/>
            <person name="Mungall C.J."/>
            <person name="Matthews B.B."/>
            <person name="Campbell K.S."/>
            <person name="Hradecky P."/>
            <person name="Huang Y."/>
            <person name="Kaminker J.S."/>
            <person name="Millburn G.H."/>
            <person name="Prochnik S.E."/>
            <person name="Smith C.D."/>
            <person name="Tupy J.L."/>
            <person name="Whitfield E.J."/>
            <person name="Bayraktaroglu L."/>
            <person name="Berman B.P."/>
            <person name="Bettencourt B.R."/>
            <person name="Celniker S.E."/>
            <person name="de Grey A.D.N.J."/>
            <person name="Drysdale R.A."/>
            <person name="Harris N.L."/>
            <person name="Richter J."/>
            <person name="Russo S."/>
            <person name="Schroeder A.J."/>
            <person name="Shu S.Q."/>
            <person name="Stapleton M."/>
            <person name="Yamada C."/>
            <person name="Ashburner M."/>
            <person name="Gelbart W.M."/>
            <person name="Rubin G.M."/>
            <person name="Lewis S.E."/>
        </authorList>
    </citation>
    <scope>GENOME REANNOTATION</scope>
    <source>
        <strain>Berkeley</strain>
    </source>
</reference>
<reference evidence="6" key="5">
    <citation type="submission" date="2007-10" db="EMBL/GenBank/DDBJ databases">
        <authorList>
            <person name="Stapleton M."/>
            <person name="Carlson J."/>
            <person name="Frise E."/>
            <person name="Kapadia B."/>
            <person name="Park S."/>
            <person name="Wan K."/>
            <person name="Yu C."/>
            <person name="Celniker S."/>
        </authorList>
    </citation>
    <scope>NUCLEOTIDE SEQUENCE [LARGE SCALE MRNA]</scope>
    <source>
        <strain evidence="7">Berkeley</strain>
        <tissue>Embryo</tissue>
    </source>
</reference>
<evidence type="ECO:0000255" key="1"/>
<evidence type="ECO:0000269" key="2">
    <source>
    </source>
</evidence>
<evidence type="ECO:0000269" key="3">
    <source ref="2"/>
</evidence>
<evidence type="ECO:0000305" key="4"/>
<evidence type="ECO:0000312" key="5">
    <source>
        <dbReference type="EMBL" id="AAF46447.2"/>
    </source>
</evidence>
<evidence type="ECO:0000312" key="6">
    <source>
        <dbReference type="EMBL" id="AAG43498.1"/>
    </source>
</evidence>
<evidence type="ECO:0000312" key="7">
    <source>
        <dbReference type="EMBL" id="ABV82367.1"/>
    </source>
</evidence>
<evidence type="ECO:0000312" key="8">
    <source>
        <dbReference type="EMBL" id="BAB83666.1"/>
    </source>
</evidence>
<evidence type="ECO:0000312" key="9">
    <source>
        <dbReference type="FlyBase" id="FBgn0030090"/>
    </source>
</evidence>
<name>FEND_DROME</name>
<protein>
    <recommendedName>
        <fullName>Transmembrane protein fend</fullName>
    </recommendedName>
    <alternativeName>
        <fullName>Protein forked end</fullName>
    </alternativeName>
</protein>
<feature type="signal peptide" evidence="1">
    <location>
        <begin position="1"/>
        <end position="18"/>
    </location>
</feature>
<feature type="chain" id="PRO_0000420127" description="Transmembrane protein fend" evidence="1">
    <location>
        <begin position="19"/>
        <end position="321"/>
    </location>
</feature>
<feature type="topological domain" description="Extracellular" evidence="1">
    <location>
        <begin position="19"/>
        <end position="261"/>
    </location>
</feature>
<feature type="transmembrane region" description="Helical" evidence="1">
    <location>
        <begin position="262"/>
        <end position="282"/>
    </location>
</feature>
<feature type="topological domain" description="Cytoplasmic" evidence="1">
    <location>
        <begin position="283"/>
        <end position="321"/>
    </location>
</feature>
<dbReference type="EMBL" id="AB065095">
    <property type="protein sequence ID" value="BAB83666.1"/>
    <property type="molecule type" value="mRNA"/>
</dbReference>
<dbReference type="EMBL" id="AF209858">
    <property type="protein sequence ID" value="AAG43498.1"/>
    <property type="molecule type" value="mRNA"/>
</dbReference>
<dbReference type="EMBL" id="AE014298">
    <property type="protein sequence ID" value="AAF46447.2"/>
    <property type="molecule type" value="Genomic_DNA"/>
</dbReference>
<dbReference type="EMBL" id="BT030985">
    <property type="protein sequence ID" value="ABV82367.1"/>
    <property type="molecule type" value="mRNA"/>
</dbReference>
<dbReference type="RefSeq" id="NP_001259372.1">
    <property type="nucleotide sequence ID" value="NM_001272443.2"/>
</dbReference>
<dbReference type="RefSeq" id="NP_572528.1">
    <property type="nucleotide sequence ID" value="NM_132300.3"/>
</dbReference>
<dbReference type="BioGRID" id="58298">
    <property type="interactions" value="5"/>
</dbReference>
<dbReference type="FunCoup" id="Q9GNL3">
    <property type="interactions" value="4"/>
</dbReference>
<dbReference type="IntAct" id="Q9GNL3">
    <property type="interactions" value="1"/>
</dbReference>
<dbReference type="GlyGen" id="Q9GNL3">
    <property type="glycosylation" value="3 sites"/>
</dbReference>
<dbReference type="PaxDb" id="7227-FBpp0305496"/>
<dbReference type="DNASU" id="31843"/>
<dbReference type="EnsemblMetazoa" id="FBtr0071349">
    <property type="protein sequence ID" value="FBpp0071284"/>
    <property type="gene ID" value="FBgn0030090"/>
</dbReference>
<dbReference type="EnsemblMetazoa" id="FBtr0333304">
    <property type="protein sequence ID" value="FBpp0305496"/>
    <property type="gene ID" value="FBgn0030090"/>
</dbReference>
<dbReference type="GeneID" id="31843"/>
<dbReference type="KEGG" id="dme:Dmel_CG12664"/>
<dbReference type="UCSC" id="CG12664-RB">
    <property type="organism name" value="d. melanogaster"/>
</dbReference>
<dbReference type="AGR" id="FB:FBgn0030090"/>
<dbReference type="CTD" id="31843"/>
<dbReference type="FlyBase" id="FBgn0030090">
    <property type="gene designation" value="fend"/>
</dbReference>
<dbReference type="VEuPathDB" id="VectorBase:FBgn0030090"/>
<dbReference type="eggNOG" id="ENOG502RJI0">
    <property type="taxonomic scope" value="Eukaryota"/>
</dbReference>
<dbReference type="HOGENOM" id="CLU_869525_0_0_1"/>
<dbReference type="InParanoid" id="Q9GNL3"/>
<dbReference type="OMA" id="YNIQVTC"/>
<dbReference type="OrthoDB" id="8195614at2759"/>
<dbReference type="PhylomeDB" id="Q9GNL3"/>
<dbReference type="BioGRID-ORCS" id="31843">
    <property type="hits" value="0 hits in 1 CRISPR screen"/>
</dbReference>
<dbReference type="ChiTaRS" id="fend">
    <property type="organism name" value="fly"/>
</dbReference>
<dbReference type="GenomeRNAi" id="31843"/>
<dbReference type="PRO" id="PR:Q9GNL3"/>
<dbReference type="Proteomes" id="UP000000803">
    <property type="component" value="Chromosome X"/>
</dbReference>
<dbReference type="Bgee" id="FBgn0030090">
    <property type="expression patterns" value="Expressed in alpha'/beta' Kenyon cell (Drosophila) in insect head and 227 other cell types or tissues"/>
</dbReference>
<dbReference type="ExpressionAtlas" id="Q9GNL3">
    <property type="expression patterns" value="baseline and differential"/>
</dbReference>
<dbReference type="GO" id="GO:0016020">
    <property type="term" value="C:membrane"/>
    <property type="evidence" value="ECO:0007669"/>
    <property type="project" value="UniProtKB-SubCell"/>
</dbReference>
<dbReference type="GO" id="GO:0008045">
    <property type="term" value="P:motor neuron axon guidance"/>
    <property type="evidence" value="ECO:0000315"/>
    <property type="project" value="FlyBase"/>
</dbReference>
<organism>
    <name type="scientific">Drosophila melanogaster</name>
    <name type="common">Fruit fly</name>
    <dbReference type="NCBI Taxonomy" id="7227"/>
    <lineage>
        <taxon>Eukaryota</taxon>
        <taxon>Metazoa</taxon>
        <taxon>Ecdysozoa</taxon>
        <taxon>Arthropoda</taxon>
        <taxon>Hexapoda</taxon>
        <taxon>Insecta</taxon>
        <taxon>Pterygota</taxon>
        <taxon>Neoptera</taxon>
        <taxon>Endopterygota</taxon>
        <taxon>Diptera</taxon>
        <taxon>Brachycera</taxon>
        <taxon>Muscomorpha</taxon>
        <taxon>Ephydroidea</taxon>
        <taxon>Drosophilidae</taxon>
        <taxon>Drosophila</taxon>
        <taxon>Sophophora</taxon>
    </lineage>
</organism>
<gene>
    <name type="primary">fend</name>
    <name evidence="6 9" type="synonym">ld14</name>
    <name type="ORF">CG12664</name>
</gene>
<comment type="function">
    <text evidence="2">Involved in the normal targeting of ventral muscle, muscle 12, by motoneurons. May function as an axon guidance molecule involved in neuromuscular specificity.</text>
</comment>
<comment type="subcellular location">
    <subcellularLocation>
        <location evidence="1">Membrane</location>
        <topology evidence="4">Single-pass type I membrane protein</topology>
    </subcellularLocation>
</comment>
<comment type="developmental stage">
    <text evidence="2">Expressed strongly throughout the yolk. Later, zygotic expression is confined to the presumptive neurogenic regions. In the CNS, expressed in the ventral nerve cord. Expressed in the PNS including in the lateral chordotonal organs at stages 16-17, expressed in epidermal cells at stages 13-15, and expressed in heart cells at stages 13-17.</text>
</comment>
<comment type="disruption phenotype">
    <text evidence="2">Homozygotes are viable and fertile, display no obvious abnormalities in the development of the CNS, PNS or muscles. However, they exhibit highly specific defects in the innervation pattern of muscle 12, but no obvious defects in the innervation of other muscles. Both loss and gain of function mutants display altered neuromuscular specificity.</text>
</comment>
<sequence length="321" mass="34626">MFHSLVLMACALAALSVAQGAGSARSKSLPLSLSLSVSVSSSLASASSPGAAADPTAAFTVTATAPTPASAPFAGKQLNRCRQSCYQQLSKDWHYCKDSVDCTNCCQKLVAPFELRILKAQRQESLVLTDIGWDEMIANASRQCLITWEVSGGGLIGNLLTDTARAELSLWPDTVYNIQVKCKHKLTGLMRRSIKLNVDTSQLVGTTTTTTTSKSSIQRQHLEQPVDHTDALEHSQHIRIPRPTDRVYIISALPTPSELGGVVYPAFGALAFFLALLVMFLFLRPQRKRFPLDADSADTATLIGRSSSSSRNSMDASTLHV</sequence>
<proteinExistence type="evidence at transcript level"/>
<keyword id="KW-0472">Membrane</keyword>
<keyword id="KW-1185">Reference proteome</keyword>
<keyword id="KW-0732">Signal</keyword>
<keyword id="KW-0812">Transmembrane</keyword>
<keyword id="KW-1133">Transmembrane helix</keyword>